<dbReference type="EMBL" id="CP001103">
    <property type="protein sequence ID" value="AEA98569.1"/>
    <property type="molecule type" value="Genomic_DNA"/>
</dbReference>
<dbReference type="RefSeq" id="WP_012518887.1">
    <property type="nucleotide sequence ID" value="NC_011138.3"/>
</dbReference>
<dbReference type="SMR" id="B4RU97"/>
<dbReference type="GeneID" id="56342911"/>
<dbReference type="KEGG" id="amc:MADE_1012165"/>
<dbReference type="HOGENOM" id="CLU_041110_0_0_6"/>
<dbReference type="Proteomes" id="UP000001870">
    <property type="component" value="Chromosome"/>
</dbReference>
<dbReference type="GO" id="GO:0005886">
    <property type="term" value="C:plasma membrane"/>
    <property type="evidence" value="ECO:0007669"/>
    <property type="project" value="UniProtKB-SubCell"/>
</dbReference>
<dbReference type="GO" id="GO:0015385">
    <property type="term" value="F:sodium:proton antiporter activity"/>
    <property type="evidence" value="ECO:0007669"/>
    <property type="project" value="InterPro"/>
</dbReference>
<dbReference type="HAMAP" id="MF_01599">
    <property type="entry name" value="NhaB"/>
    <property type="match status" value="1"/>
</dbReference>
<dbReference type="InterPro" id="IPR004671">
    <property type="entry name" value="Na+/H+_antiporter_NhaB"/>
</dbReference>
<dbReference type="NCBIfam" id="TIGR00774">
    <property type="entry name" value="NhaB"/>
    <property type="match status" value="1"/>
</dbReference>
<dbReference type="NCBIfam" id="NF007093">
    <property type="entry name" value="PRK09547.1"/>
    <property type="match status" value="1"/>
</dbReference>
<dbReference type="PANTHER" id="PTHR43302:SF1">
    <property type="entry name" value="NA(+)_H(+) ANTIPORTER NHAB"/>
    <property type="match status" value="1"/>
</dbReference>
<dbReference type="PANTHER" id="PTHR43302">
    <property type="entry name" value="TRANSPORTER ARSB-RELATED"/>
    <property type="match status" value="1"/>
</dbReference>
<dbReference type="Pfam" id="PF06450">
    <property type="entry name" value="NhaB"/>
    <property type="match status" value="1"/>
</dbReference>
<proteinExistence type="inferred from homology"/>
<reference key="1">
    <citation type="journal article" date="2008" name="ISME J.">
        <title>Comparative genomics of two ecotypes of the marine planktonic copiotroph Alteromonas macleodii suggests alternative lifestyles associated with different kinds of particulate organic matter.</title>
        <authorList>
            <person name="Ivars-Martinez E."/>
            <person name="Martin-Cuadrado A.-B."/>
            <person name="D'Auria G."/>
            <person name="Mira A."/>
            <person name="Ferriera S."/>
            <person name="Johnson J."/>
            <person name="Friedman R."/>
            <person name="Rodriguez-Valera F."/>
        </authorList>
    </citation>
    <scope>NUCLEOTIDE SEQUENCE [LARGE SCALE GENOMIC DNA]</scope>
    <source>
        <strain>DSM 17117 / CIP 110805 / LMG 28347 / Deep ecotype</strain>
    </source>
</reference>
<evidence type="ECO:0000255" key="1">
    <source>
        <dbReference type="HAMAP-Rule" id="MF_01599"/>
    </source>
</evidence>
<gene>
    <name evidence="1" type="primary">nhaB</name>
    <name type="ordered locus">MADE_1012165</name>
</gene>
<keyword id="KW-0050">Antiport</keyword>
<keyword id="KW-0997">Cell inner membrane</keyword>
<keyword id="KW-1003">Cell membrane</keyword>
<keyword id="KW-0406">Ion transport</keyword>
<keyword id="KW-0472">Membrane</keyword>
<keyword id="KW-0915">Sodium</keyword>
<keyword id="KW-0739">Sodium transport</keyword>
<keyword id="KW-0812">Transmembrane</keyword>
<keyword id="KW-1133">Transmembrane helix</keyword>
<keyword id="KW-0813">Transport</keyword>
<feature type="chain" id="PRO_0000381766" description="Na(+)/H(+) antiporter NhaB">
    <location>
        <begin position="1"/>
        <end position="524"/>
    </location>
</feature>
<feature type="transmembrane region" description="Helical" evidence="1">
    <location>
        <begin position="25"/>
        <end position="45"/>
    </location>
</feature>
<feature type="transmembrane region" description="Helical" evidence="1">
    <location>
        <begin position="97"/>
        <end position="117"/>
    </location>
</feature>
<feature type="transmembrane region" description="Helical" evidence="1">
    <location>
        <begin position="135"/>
        <end position="155"/>
    </location>
</feature>
<feature type="transmembrane region" description="Helical" evidence="1">
    <location>
        <begin position="234"/>
        <end position="254"/>
    </location>
</feature>
<feature type="transmembrane region" description="Helical" evidence="1">
    <location>
        <begin position="302"/>
        <end position="322"/>
    </location>
</feature>
<feature type="transmembrane region" description="Helical" evidence="1">
    <location>
        <begin position="352"/>
        <end position="372"/>
    </location>
</feature>
<feature type="transmembrane region" description="Helical" evidence="1">
    <location>
        <begin position="388"/>
        <end position="408"/>
    </location>
</feature>
<feature type="transmembrane region" description="Helical" evidence="1">
    <location>
        <begin position="445"/>
        <end position="465"/>
    </location>
</feature>
<feature type="transmembrane region" description="Helical" evidence="1">
    <location>
        <begin position="474"/>
        <end position="494"/>
    </location>
</feature>
<protein>
    <recommendedName>
        <fullName evidence="1">Na(+)/H(+) antiporter NhaB</fullName>
    </recommendedName>
    <alternativeName>
        <fullName evidence="1">Sodium/proton antiporter NhaB</fullName>
    </alternativeName>
</protein>
<organism>
    <name type="scientific">Alteromonas mediterranea (strain DSM 17117 / CIP 110805 / LMG 28347 / Deep ecotype)</name>
    <dbReference type="NCBI Taxonomy" id="1774373"/>
    <lineage>
        <taxon>Bacteria</taxon>
        <taxon>Pseudomonadati</taxon>
        <taxon>Pseudomonadota</taxon>
        <taxon>Gammaproteobacteria</taxon>
        <taxon>Alteromonadales</taxon>
        <taxon>Alteromonadaceae</taxon>
        <taxon>Alteromonas/Salinimonas group</taxon>
        <taxon>Alteromonas</taxon>
    </lineage>
</organism>
<name>NHAB_ALTMD</name>
<sequence length="524" mass="57346">MQTSMIAAIYKNFLGHAPDWYKKTIIAFLIVNPFIFMVDPYIAGWTLVIQFIFTLAMALKCYPLQPGGLLLIEAMFIGMTSPGHMMHEIEVNLEVLLLLVFMVAGIYFMKDLLMFLFTKLVIKVRNKLILSLSFIFASAFLSAFLDALTVVAVIISVGLGFYSIYHKVASGKEFHSDHDHTSDDELGSHDLEDFRAFLRNLMMHSAVGTALGGVMTMVGEPQNLIIADKAGWDFVEFFIRMAPVTLPVFVFGLLTTVVLEKTGTFSYGAKLPSAVRQILVDYNDHMDKGRSKRETAKLVVQALIGIWLIVGLATHMASVGLIGLSVIVLATSMSGVIEEHALGKAFEEALPFTALLCVFFGVVAVIIDQGLFQPVIHWVLSFEGETQMVMFYLANGVLSMVSDNVFVGSVYITEVTAALEAGQITRDQYDMLAVAINTGTNLPSVATPNGQAAFLFLLTSAIAPLLRLSYGRMVMMALPYTIVLTIVGLVATYIGLADATQVLYDMHLIEHHTAVEAGAQAVGH</sequence>
<comment type="function">
    <text evidence="1">Na(+)/H(+) antiporter that extrudes sodium in exchange for external protons.</text>
</comment>
<comment type="catalytic activity">
    <reaction evidence="1">
        <text>2 Na(+)(in) + 3 H(+)(out) = 2 Na(+)(out) + 3 H(+)(in)</text>
        <dbReference type="Rhea" id="RHEA:29247"/>
        <dbReference type="ChEBI" id="CHEBI:15378"/>
        <dbReference type="ChEBI" id="CHEBI:29101"/>
    </reaction>
    <physiologicalReaction direction="left-to-right" evidence="1">
        <dbReference type="Rhea" id="RHEA:29248"/>
    </physiologicalReaction>
</comment>
<comment type="subcellular location">
    <subcellularLocation>
        <location evidence="1">Cell inner membrane</location>
        <topology evidence="1">Multi-pass membrane protein</topology>
    </subcellularLocation>
</comment>
<comment type="similarity">
    <text evidence="1">Belongs to the NhaB Na(+)/H(+) (TC 2.A.34) antiporter family.</text>
</comment>
<accession>B4RU97</accession>
<accession>F2G6T5</accession>